<reference key="1">
    <citation type="journal article" date="2009" name="PLoS Genet.">
        <title>Alliance of proteomics and genomics to unravel the specificities of Sahara bacterium Deinococcus deserti.</title>
        <authorList>
            <person name="de Groot A."/>
            <person name="Dulermo R."/>
            <person name="Ortet P."/>
            <person name="Blanchard L."/>
            <person name="Guerin P."/>
            <person name="Fernandez B."/>
            <person name="Vacherie B."/>
            <person name="Dossat C."/>
            <person name="Jolivet E."/>
            <person name="Siguier P."/>
            <person name="Chandler M."/>
            <person name="Barakat M."/>
            <person name="Dedieu A."/>
            <person name="Barbe V."/>
            <person name="Heulin T."/>
            <person name="Sommer S."/>
            <person name="Achouak W."/>
            <person name="Armengaud J."/>
        </authorList>
    </citation>
    <scope>NUCLEOTIDE SEQUENCE [LARGE SCALE GENOMIC DNA]</scope>
    <source>
        <strain>DSM 17065 / CIP 109153 / LMG 22923 / VCD115</strain>
    </source>
</reference>
<dbReference type="EMBL" id="CP001114">
    <property type="protein sequence ID" value="ACO46256.1"/>
    <property type="molecule type" value="Genomic_DNA"/>
</dbReference>
<dbReference type="RefSeq" id="WP_012693379.1">
    <property type="nucleotide sequence ID" value="NC_012526.1"/>
</dbReference>
<dbReference type="SMR" id="C1CVN9"/>
<dbReference type="STRING" id="546414.Deide_13190"/>
<dbReference type="PaxDb" id="546414-Deide_13190"/>
<dbReference type="KEGG" id="ddr:Deide_13190"/>
<dbReference type="eggNOG" id="COG0264">
    <property type="taxonomic scope" value="Bacteria"/>
</dbReference>
<dbReference type="HOGENOM" id="CLU_047155_0_2_0"/>
<dbReference type="OrthoDB" id="9808348at2"/>
<dbReference type="Proteomes" id="UP000002208">
    <property type="component" value="Chromosome"/>
</dbReference>
<dbReference type="GO" id="GO:0005737">
    <property type="term" value="C:cytoplasm"/>
    <property type="evidence" value="ECO:0007669"/>
    <property type="project" value="UniProtKB-SubCell"/>
</dbReference>
<dbReference type="GO" id="GO:0003746">
    <property type="term" value="F:translation elongation factor activity"/>
    <property type="evidence" value="ECO:0007669"/>
    <property type="project" value="UniProtKB-UniRule"/>
</dbReference>
<dbReference type="CDD" id="cd14275">
    <property type="entry name" value="UBA_EF-Ts"/>
    <property type="match status" value="1"/>
</dbReference>
<dbReference type="FunFam" id="1.10.286.20:FF:000001">
    <property type="entry name" value="Elongation factor Ts"/>
    <property type="match status" value="1"/>
</dbReference>
<dbReference type="FunFam" id="1.10.8.10:FF:000001">
    <property type="entry name" value="Elongation factor Ts"/>
    <property type="match status" value="1"/>
</dbReference>
<dbReference type="Gene3D" id="1.10.286.20">
    <property type="match status" value="1"/>
</dbReference>
<dbReference type="Gene3D" id="1.10.8.10">
    <property type="entry name" value="DNA helicase RuvA subunit, C-terminal domain"/>
    <property type="match status" value="1"/>
</dbReference>
<dbReference type="Gene3D" id="3.30.479.20">
    <property type="entry name" value="Elongation factor Ts, dimerisation domain"/>
    <property type="match status" value="2"/>
</dbReference>
<dbReference type="HAMAP" id="MF_00050">
    <property type="entry name" value="EF_Ts"/>
    <property type="match status" value="1"/>
</dbReference>
<dbReference type="InterPro" id="IPR036402">
    <property type="entry name" value="EF-Ts_dimer_sf"/>
</dbReference>
<dbReference type="InterPro" id="IPR001816">
    <property type="entry name" value="Transl_elong_EFTs/EF1B"/>
</dbReference>
<dbReference type="InterPro" id="IPR014039">
    <property type="entry name" value="Transl_elong_EFTs/EF1B_dimer"/>
</dbReference>
<dbReference type="InterPro" id="IPR018101">
    <property type="entry name" value="Transl_elong_Ts_CS"/>
</dbReference>
<dbReference type="InterPro" id="IPR009060">
    <property type="entry name" value="UBA-like_sf"/>
</dbReference>
<dbReference type="NCBIfam" id="TIGR00116">
    <property type="entry name" value="tsf"/>
    <property type="match status" value="1"/>
</dbReference>
<dbReference type="PANTHER" id="PTHR11741">
    <property type="entry name" value="ELONGATION FACTOR TS"/>
    <property type="match status" value="1"/>
</dbReference>
<dbReference type="PANTHER" id="PTHR11741:SF0">
    <property type="entry name" value="ELONGATION FACTOR TS, MITOCHONDRIAL"/>
    <property type="match status" value="1"/>
</dbReference>
<dbReference type="Pfam" id="PF00889">
    <property type="entry name" value="EF_TS"/>
    <property type="match status" value="1"/>
</dbReference>
<dbReference type="SUPFAM" id="SSF54713">
    <property type="entry name" value="Elongation factor Ts (EF-Ts), dimerisation domain"/>
    <property type="match status" value="1"/>
</dbReference>
<dbReference type="SUPFAM" id="SSF46934">
    <property type="entry name" value="UBA-like"/>
    <property type="match status" value="1"/>
</dbReference>
<dbReference type="PROSITE" id="PS01126">
    <property type="entry name" value="EF_TS_1"/>
    <property type="match status" value="1"/>
</dbReference>
<dbReference type="PROSITE" id="PS01127">
    <property type="entry name" value="EF_TS_2"/>
    <property type="match status" value="1"/>
</dbReference>
<keyword id="KW-0963">Cytoplasm</keyword>
<keyword id="KW-0251">Elongation factor</keyword>
<keyword id="KW-0648">Protein biosynthesis</keyword>
<keyword id="KW-1185">Reference proteome</keyword>
<protein>
    <recommendedName>
        <fullName evidence="1">Elongation factor Ts</fullName>
        <shortName evidence="1">EF-Ts</shortName>
    </recommendedName>
</protein>
<feature type="chain" id="PRO_1000202235" description="Elongation factor Ts">
    <location>
        <begin position="1"/>
        <end position="264"/>
    </location>
</feature>
<feature type="region of interest" description="Involved in Mg(2+) ion dislocation from EF-Tu" evidence="1">
    <location>
        <begin position="76"/>
        <end position="79"/>
    </location>
</feature>
<evidence type="ECO:0000255" key="1">
    <source>
        <dbReference type="HAMAP-Rule" id="MF_00050"/>
    </source>
</evidence>
<accession>C1CVN9</accession>
<comment type="function">
    <text evidence="1">Associates with the EF-Tu.GDP complex and induces the exchange of GDP to GTP. It remains bound to the aminoacyl-tRNA.EF-Tu.GTP complex up to the GTP hydrolysis stage on the ribosome.</text>
</comment>
<comment type="subcellular location">
    <subcellularLocation>
        <location evidence="1">Cytoplasm</location>
    </subcellularLocation>
</comment>
<comment type="similarity">
    <text evidence="1">Belongs to the EF-Ts family.</text>
</comment>
<sequence length="264" mass="28864">MMESIKKLRELTGAGMMDVKKALSDAGNDEDKAVALLRERGIVKAAKKADREAKEGIVRFVVEGNRAAIVEVNSETDFVARNSDFQALVEKLAQTALSAKTNDVEEFRNFSMDGETVGTVVAAAAGKIGENLVLNRVAYIEGDKVAGYVHSNGKIGVLVDVAGGDETKAKDVALHVAAERPQYLSRDEVNQDDIEKEREILTNKALNEGKPQQIVEKIVSGQIGKFYEEKVLPEQRYVKDNSMTVGQYLGDASVKRFVRFEIGA</sequence>
<name>EFTS_DEIDV</name>
<gene>
    <name evidence="1" type="primary">tsf</name>
    <name type="ordered locus">Deide_13190</name>
</gene>
<proteinExistence type="inferred from homology"/>
<organism>
    <name type="scientific">Deinococcus deserti (strain DSM 17065 / CIP 109153 / LMG 22923 / VCD115)</name>
    <dbReference type="NCBI Taxonomy" id="546414"/>
    <lineage>
        <taxon>Bacteria</taxon>
        <taxon>Thermotogati</taxon>
        <taxon>Deinococcota</taxon>
        <taxon>Deinococci</taxon>
        <taxon>Deinococcales</taxon>
        <taxon>Deinococcaceae</taxon>
        <taxon>Deinococcus</taxon>
    </lineage>
</organism>